<protein>
    <recommendedName>
        <fullName evidence="1">Tetrahydromethanopterin S-methyltransferase subunit A</fullName>
        <ecNumber evidence="1">7.2.1.4</ecNumber>
    </recommendedName>
    <alternativeName>
        <fullName evidence="1">N5-methyltetrahydromethanopterin--coenzyme M methyltransferase subunit A</fullName>
    </alternativeName>
</protein>
<name>MTRA_METEZ</name>
<accession>D7EBK7</accession>
<proteinExistence type="inferred from homology"/>
<feature type="chain" id="PRO_0000403065" description="Tetrahydromethanopterin S-methyltransferase subunit A">
    <location>
        <begin position="1"/>
        <end position="241"/>
    </location>
</feature>
<feature type="topological domain" description="Cytoplasmic" evidence="1">
    <location>
        <begin position="1"/>
        <end position="220"/>
    </location>
</feature>
<feature type="transmembrane region" description="Helical" evidence="1">
    <location>
        <begin position="221"/>
        <end position="241"/>
    </location>
</feature>
<feature type="binding site" evidence="1">
    <location>
        <position position="85"/>
    </location>
    <ligand>
        <name>5-hydroxybenzimidazolylcob(I)amide</name>
        <dbReference type="ChEBI" id="CHEBI:60494"/>
        <note>cofactor</note>
    </ligand>
</feature>
<comment type="function">
    <text evidence="1">Part of a complex that catalyzes the formation of methyl-coenzyme M and tetrahydromethanopterin from coenzyme M and methyl-tetrahydromethanopterin. This is an energy-conserving, sodium-ion translocating step.</text>
</comment>
<comment type="catalytic activity">
    <reaction evidence="1">
        <text>5-methyl-5,6,7,8-tetrahydromethanopterin + coenzyme M + 2 Na(+)(in) = 5,6,7,8-tetrahydromethanopterin + methyl-coenzyme M + 2 Na(+)(out)</text>
        <dbReference type="Rhea" id="RHEA:53492"/>
        <dbReference type="ChEBI" id="CHEBI:29101"/>
        <dbReference type="ChEBI" id="CHEBI:58103"/>
        <dbReference type="ChEBI" id="CHEBI:58116"/>
        <dbReference type="ChEBI" id="CHEBI:58286"/>
        <dbReference type="ChEBI" id="CHEBI:58319"/>
        <dbReference type="EC" id="7.2.1.4"/>
    </reaction>
</comment>
<comment type="cofactor">
    <cofactor evidence="1">
        <name>5-hydroxybenzimidazolylcob(I)amide</name>
        <dbReference type="ChEBI" id="CHEBI:60494"/>
    </cofactor>
    <text evidence="1">Binds 1 5-hydroxybenzimidazolylcobamide group.</text>
</comment>
<comment type="pathway">
    <text evidence="1">One-carbon metabolism; methanogenesis from CO(2); methyl-coenzyme M from 5,10-methylene-5,6,7,8-tetrahydromethanopterin: step 2/2.</text>
</comment>
<comment type="subunit">
    <text evidence="1">The complex is composed of 8 subunits; MtrA, MtrB, MtrC, MtrD, MtrE, MtrF, MtrG and MtrH.</text>
</comment>
<comment type="subcellular location">
    <subcellularLocation>
        <location evidence="1">Cell membrane</location>
        <topology evidence="1">Single-pass membrane protein</topology>
    </subcellularLocation>
</comment>
<comment type="similarity">
    <text evidence="1">Belongs to the MtrA family.</text>
</comment>
<keyword id="KW-1003">Cell membrane</keyword>
<keyword id="KW-0170">Cobalt</keyword>
<keyword id="KW-0472">Membrane</keyword>
<keyword id="KW-0484">Methanogenesis</keyword>
<keyword id="KW-0489">Methyltransferase</keyword>
<keyword id="KW-0554">One-carbon metabolism</keyword>
<keyword id="KW-1185">Reference proteome</keyword>
<keyword id="KW-0808">Transferase</keyword>
<keyword id="KW-1278">Translocase</keyword>
<keyword id="KW-0812">Transmembrane</keyword>
<keyword id="KW-1133">Transmembrane helix</keyword>
<reference key="1">
    <citation type="submission" date="2010-06" db="EMBL/GenBank/DDBJ databases">
        <title>Complete sequence chromosome of Methanohalobium evestigatum Z-7303.</title>
        <authorList>
            <consortium name="US DOE Joint Genome Institute"/>
            <person name="Lucas S."/>
            <person name="Copeland A."/>
            <person name="Lapidus A."/>
            <person name="Cheng J.-F."/>
            <person name="Bruce D."/>
            <person name="Goodwin L."/>
            <person name="Pitluck S."/>
            <person name="Saunders E."/>
            <person name="Detter J.C."/>
            <person name="Han C."/>
            <person name="Tapia R."/>
            <person name="Land M."/>
            <person name="Hauser L."/>
            <person name="Kyrpides N."/>
            <person name="Mikhailova N."/>
            <person name="Sieprawska-Lupa M."/>
            <person name="Whitman W.B."/>
            <person name="Anderson I."/>
            <person name="Woyke T."/>
        </authorList>
    </citation>
    <scope>NUCLEOTIDE SEQUENCE [LARGE SCALE GENOMIC DNA]</scope>
    <source>
        <strain>ATCC BAA-1072 / DSM 3721 / NBRC 107634 / OCM 161 / Z-7303</strain>
    </source>
</reference>
<dbReference type="EC" id="7.2.1.4" evidence="1"/>
<dbReference type="EMBL" id="CP002069">
    <property type="protein sequence ID" value="ADI74849.1"/>
    <property type="molecule type" value="Genomic_DNA"/>
</dbReference>
<dbReference type="RefSeq" id="WP_013195414.1">
    <property type="nucleotide sequence ID" value="NC_014253.1"/>
</dbReference>
<dbReference type="SMR" id="D7EBK7"/>
<dbReference type="STRING" id="644295.Metev_2020"/>
<dbReference type="GeneID" id="9347680"/>
<dbReference type="KEGG" id="mev:Metev_2020"/>
<dbReference type="HOGENOM" id="CLU_100863_0_0_2"/>
<dbReference type="OrthoDB" id="130682at2157"/>
<dbReference type="UniPathway" id="UPA00640">
    <property type="reaction ID" value="UER00698"/>
</dbReference>
<dbReference type="Proteomes" id="UP000000391">
    <property type="component" value="Chromosome"/>
</dbReference>
<dbReference type="GO" id="GO:0005886">
    <property type="term" value="C:plasma membrane"/>
    <property type="evidence" value="ECO:0007669"/>
    <property type="project" value="UniProtKB-SubCell"/>
</dbReference>
<dbReference type="GO" id="GO:0050897">
    <property type="term" value="F:cobalt ion binding"/>
    <property type="evidence" value="ECO:0007669"/>
    <property type="project" value="InterPro"/>
</dbReference>
<dbReference type="GO" id="GO:0030269">
    <property type="term" value="F:tetrahydromethanopterin S-methyltransferase activity"/>
    <property type="evidence" value="ECO:0007669"/>
    <property type="project" value="UniProtKB-UniRule"/>
</dbReference>
<dbReference type="GO" id="GO:0019386">
    <property type="term" value="P:methanogenesis, from carbon dioxide"/>
    <property type="evidence" value="ECO:0007669"/>
    <property type="project" value="UniProtKB-UniRule"/>
</dbReference>
<dbReference type="GO" id="GO:0032259">
    <property type="term" value="P:methylation"/>
    <property type="evidence" value="ECO:0007669"/>
    <property type="project" value="UniProtKB-KW"/>
</dbReference>
<dbReference type="GO" id="GO:0006730">
    <property type="term" value="P:one-carbon metabolic process"/>
    <property type="evidence" value="ECO:0007669"/>
    <property type="project" value="UniProtKB-UniRule"/>
</dbReference>
<dbReference type="HAMAP" id="MF_01093">
    <property type="entry name" value="MtrA"/>
    <property type="match status" value="1"/>
</dbReference>
<dbReference type="InterPro" id="IPR030688">
    <property type="entry name" value="MeTrfase_MtrA/MtxA"/>
</dbReference>
<dbReference type="InterPro" id="IPR005778">
    <property type="entry name" value="MtrA"/>
</dbReference>
<dbReference type="NCBIfam" id="TIGR01111">
    <property type="entry name" value="mtrA"/>
    <property type="match status" value="1"/>
</dbReference>
<dbReference type="NCBIfam" id="NF002126">
    <property type="entry name" value="PRK00964.1-4"/>
    <property type="match status" value="1"/>
</dbReference>
<dbReference type="Pfam" id="PF04208">
    <property type="entry name" value="MtrA"/>
    <property type="match status" value="1"/>
</dbReference>
<dbReference type="PIRSF" id="PIRSF500207">
    <property type="entry name" value="MtrA"/>
    <property type="match status" value="1"/>
</dbReference>
<dbReference type="PIRSF" id="PIRSF009452">
    <property type="entry name" value="MtrA_MtxA"/>
    <property type="match status" value="1"/>
</dbReference>
<gene>
    <name evidence="1" type="primary">mtrA</name>
    <name type="ordered locus">Metev_2020</name>
</gene>
<evidence type="ECO:0000255" key="1">
    <source>
        <dbReference type="HAMAP-Rule" id="MF_01093"/>
    </source>
</evidence>
<sequence>MAEKKEPAEGWPILKGEYEVGDPNNCVAVITCGSHLEGQPMLDAGASIVGPCKTENLGLEKVVSHIISNPNIRYLIVTGAEVKGHITGEAMMMLHKNGVKDNRIVGATGAIPYVENLTEESVERLQQQLEECVDLLGTEDLNTITSKIKELAEKDPGAFDAEPMIIQLEEEEEEEEEGGIKPMSAEIATIQARIRNIEKDMINAGEMNKLHSGVLAGKIEGIMVGLVLSLFVLGLLLFGGM</sequence>
<organism>
    <name type="scientific">Methanohalobium evestigatum (strain ATCC BAA-1072 / DSM 3721 / NBRC 107634 / OCM 161 / Z-7303)</name>
    <dbReference type="NCBI Taxonomy" id="644295"/>
    <lineage>
        <taxon>Archaea</taxon>
        <taxon>Methanobacteriati</taxon>
        <taxon>Methanobacteriota</taxon>
        <taxon>Stenosarchaea group</taxon>
        <taxon>Methanomicrobia</taxon>
        <taxon>Methanosarcinales</taxon>
        <taxon>Methanosarcinaceae</taxon>
        <taxon>Methanohalobium</taxon>
    </lineage>
</organism>